<evidence type="ECO:0000255" key="1">
    <source>
        <dbReference type="HAMAP-Rule" id="MF_00222"/>
    </source>
</evidence>
<accession>Q7MYI6</accession>
<proteinExistence type="inferred from homology"/>
<feature type="chain" id="PRO_1000021315" description="Shikimate dehydrogenase (NADP(+))">
    <location>
        <begin position="1"/>
        <end position="272"/>
    </location>
</feature>
<feature type="active site" description="Proton acceptor" evidence="1">
    <location>
        <position position="65"/>
    </location>
</feature>
<feature type="binding site" evidence="1">
    <location>
        <begin position="14"/>
        <end position="16"/>
    </location>
    <ligand>
        <name>shikimate</name>
        <dbReference type="ChEBI" id="CHEBI:36208"/>
    </ligand>
</feature>
<feature type="binding site" evidence="1">
    <location>
        <position position="61"/>
    </location>
    <ligand>
        <name>shikimate</name>
        <dbReference type="ChEBI" id="CHEBI:36208"/>
    </ligand>
</feature>
<feature type="binding site" evidence="1">
    <location>
        <position position="77"/>
    </location>
    <ligand>
        <name>NADP(+)</name>
        <dbReference type="ChEBI" id="CHEBI:58349"/>
    </ligand>
</feature>
<feature type="binding site" evidence="1">
    <location>
        <position position="86"/>
    </location>
    <ligand>
        <name>shikimate</name>
        <dbReference type="ChEBI" id="CHEBI:36208"/>
    </ligand>
</feature>
<feature type="binding site" evidence="1">
    <location>
        <position position="102"/>
    </location>
    <ligand>
        <name>shikimate</name>
        <dbReference type="ChEBI" id="CHEBI:36208"/>
    </ligand>
</feature>
<feature type="binding site" evidence="1">
    <location>
        <begin position="126"/>
        <end position="130"/>
    </location>
    <ligand>
        <name>NADP(+)</name>
        <dbReference type="ChEBI" id="CHEBI:58349"/>
    </ligand>
</feature>
<feature type="binding site" evidence="1">
    <location>
        <begin position="149"/>
        <end position="154"/>
    </location>
    <ligand>
        <name>NADP(+)</name>
        <dbReference type="ChEBI" id="CHEBI:58349"/>
    </ligand>
</feature>
<feature type="binding site" evidence="1">
    <location>
        <position position="213"/>
    </location>
    <ligand>
        <name>NADP(+)</name>
        <dbReference type="ChEBI" id="CHEBI:58349"/>
    </ligand>
</feature>
<feature type="binding site" evidence="1">
    <location>
        <position position="215"/>
    </location>
    <ligand>
        <name>shikimate</name>
        <dbReference type="ChEBI" id="CHEBI:36208"/>
    </ligand>
</feature>
<feature type="binding site" evidence="1">
    <location>
        <position position="237"/>
    </location>
    <ligand>
        <name>NADP(+)</name>
        <dbReference type="ChEBI" id="CHEBI:58349"/>
    </ligand>
</feature>
<protein>
    <recommendedName>
        <fullName evidence="1">Shikimate dehydrogenase (NADP(+))</fullName>
        <shortName evidence="1">SDH</shortName>
        <ecNumber evidence="1">1.1.1.25</ecNumber>
    </recommendedName>
</protein>
<sequence>MDQFAVFGNPVAHSKSPRIHQLFARQTGIEHRYGKILVPISKFQEALDTFLKQGGIGVNITVPFKEQAFIRANELTERARLSGAVNTLKLLNNNQLLGDNTDGIGLLTDLMRLEFITQGQHILIIGAGGAARGVLFPLLEFGCKITITNRTFSRAIQVANNFSAIGSIRPAEMKVLNSPEFDLIINATASGINGEIPTISPFIFNENCVCYDMFYQANLTPFISFARKHGVSRYADGLGMLVGQAAHSFKLWHGVLPEISPVLLTLEQELRS</sequence>
<gene>
    <name evidence="1" type="primary">aroE</name>
    <name type="ordered locus">plu4691</name>
</gene>
<name>AROE_PHOLL</name>
<comment type="function">
    <text evidence="1">Involved in the biosynthesis of the chorismate, which leads to the biosynthesis of aromatic amino acids. Catalyzes the reversible NADPH linked reduction of 3-dehydroshikimate (DHSA) to yield shikimate (SA).</text>
</comment>
<comment type="catalytic activity">
    <reaction evidence="1">
        <text>shikimate + NADP(+) = 3-dehydroshikimate + NADPH + H(+)</text>
        <dbReference type="Rhea" id="RHEA:17737"/>
        <dbReference type="ChEBI" id="CHEBI:15378"/>
        <dbReference type="ChEBI" id="CHEBI:16630"/>
        <dbReference type="ChEBI" id="CHEBI:36208"/>
        <dbReference type="ChEBI" id="CHEBI:57783"/>
        <dbReference type="ChEBI" id="CHEBI:58349"/>
        <dbReference type="EC" id="1.1.1.25"/>
    </reaction>
</comment>
<comment type="pathway">
    <text evidence="1">Metabolic intermediate biosynthesis; chorismate biosynthesis; chorismate from D-erythrose 4-phosphate and phosphoenolpyruvate: step 4/7.</text>
</comment>
<comment type="subunit">
    <text evidence="1">Homodimer.</text>
</comment>
<comment type="similarity">
    <text evidence="1">Belongs to the shikimate dehydrogenase family.</text>
</comment>
<organism>
    <name type="scientific">Photorhabdus laumondii subsp. laumondii (strain DSM 15139 / CIP 105565 / TT01)</name>
    <name type="common">Photorhabdus luminescens subsp. laumondii</name>
    <dbReference type="NCBI Taxonomy" id="243265"/>
    <lineage>
        <taxon>Bacteria</taxon>
        <taxon>Pseudomonadati</taxon>
        <taxon>Pseudomonadota</taxon>
        <taxon>Gammaproteobacteria</taxon>
        <taxon>Enterobacterales</taxon>
        <taxon>Morganellaceae</taxon>
        <taxon>Photorhabdus</taxon>
    </lineage>
</organism>
<keyword id="KW-0028">Amino-acid biosynthesis</keyword>
<keyword id="KW-0057">Aromatic amino acid biosynthesis</keyword>
<keyword id="KW-0521">NADP</keyword>
<keyword id="KW-0560">Oxidoreductase</keyword>
<keyword id="KW-1185">Reference proteome</keyword>
<reference key="1">
    <citation type="journal article" date="2003" name="Nat. Biotechnol.">
        <title>The genome sequence of the entomopathogenic bacterium Photorhabdus luminescens.</title>
        <authorList>
            <person name="Duchaud E."/>
            <person name="Rusniok C."/>
            <person name="Frangeul L."/>
            <person name="Buchrieser C."/>
            <person name="Givaudan A."/>
            <person name="Taourit S."/>
            <person name="Bocs S."/>
            <person name="Boursaux-Eude C."/>
            <person name="Chandler M."/>
            <person name="Charles J.-F."/>
            <person name="Dassa E."/>
            <person name="Derose R."/>
            <person name="Derzelle S."/>
            <person name="Freyssinet G."/>
            <person name="Gaudriault S."/>
            <person name="Medigue C."/>
            <person name="Lanois A."/>
            <person name="Powell K."/>
            <person name="Siguier P."/>
            <person name="Vincent R."/>
            <person name="Wingate V."/>
            <person name="Zouine M."/>
            <person name="Glaser P."/>
            <person name="Boemare N."/>
            <person name="Danchin A."/>
            <person name="Kunst F."/>
        </authorList>
    </citation>
    <scope>NUCLEOTIDE SEQUENCE [LARGE SCALE GENOMIC DNA]</scope>
    <source>
        <strain>DSM 15139 / CIP 105565 / TT01</strain>
    </source>
</reference>
<dbReference type="EC" id="1.1.1.25" evidence="1"/>
<dbReference type="EMBL" id="BX571874">
    <property type="protein sequence ID" value="CAE17063.1"/>
    <property type="molecule type" value="Genomic_DNA"/>
</dbReference>
<dbReference type="RefSeq" id="WP_011148761.1">
    <property type="nucleotide sequence ID" value="NC_005126.1"/>
</dbReference>
<dbReference type="SMR" id="Q7MYI6"/>
<dbReference type="STRING" id="243265.plu4691"/>
<dbReference type="GeneID" id="48850915"/>
<dbReference type="KEGG" id="plu:plu4691"/>
<dbReference type="eggNOG" id="COG0169">
    <property type="taxonomic scope" value="Bacteria"/>
</dbReference>
<dbReference type="HOGENOM" id="CLU_044063_2_1_6"/>
<dbReference type="OrthoDB" id="9776868at2"/>
<dbReference type="UniPathway" id="UPA00053">
    <property type="reaction ID" value="UER00087"/>
</dbReference>
<dbReference type="Proteomes" id="UP000002514">
    <property type="component" value="Chromosome"/>
</dbReference>
<dbReference type="GO" id="GO:0005829">
    <property type="term" value="C:cytosol"/>
    <property type="evidence" value="ECO:0007669"/>
    <property type="project" value="TreeGrafter"/>
</dbReference>
<dbReference type="GO" id="GO:0050661">
    <property type="term" value="F:NADP binding"/>
    <property type="evidence" value="ECO:0007669"/>
    <property type="project" value="InterPro"/>
</dbReference>
<dbReference type="GO" id="GO:0004764">
    <property type="term" value="F:shikimate 3-dehydrogenase (NADP+) activity"/>
    <property type="evidence" value="ECO:0007669"/>
    <property type="project" value="UniProtKB-UniRule"/>
</dbReference>
<dbReference type="GO" id="GO:0008652">
    <property type="term" value="P:amino acid biosynthetic process"/>
    <property type="evidence" value="ECO:0007669"/>
    <property type="project" value="UniProtKB-KW"/>
</dbReference>
<dbReference type="GO" id="GO:0009073">
    <property type="term" value="P:aromatic amino acid family biosynthetic process"/>
    <property type="evidence" value="ECO:0007669"/>
    <property type="project" value="UniProtKB-KW"/>
</dbReference>
<dbReference type="GO" id="GO:0009423">
    <property type="term" value="P:chorismate biosynthetic process"/>
    <property type="evidence" value="ECO:0007669"/>
    <property type="project" value="UniProtKB-UniRule"/>
</dbReference>
<dbReference type="GO" id="GO:0019632">
    <property type="term" value="P:shikimate metabolic process"/>
    <property type="evidence" value="ECO:0007669"/>
    <property type="project" value="InterPro"/>
</dbReference>
<dbReference type="CDD" id="cd01065">
    <property type="entry name" value="NAD_bind_Shikimate_DH"/>
    <property type="match status" value="1"/>
</dbReference>
<dbReference type="FunFam" id="3.40.50.10860:FF:000006">
    <property type="entry name" value="Shikimate dehydrogenase (NADP(+))"/>
    <property type="match status" value="1"/>
</dbReference>
<dbReference type="FunFam" id="3.40.50.720:FF:000104">
    <property type="entry name" value="Shikimate dehydrogenase (NADP(+))"/>
    <property type="match status" value="1"/>
</dbReference>
<dbReference type="Gene3D" id="3.40.50.10860">
    <property type="entry name" value="Leucine Dehydrogenase, chain A, domain 1"/>
    <property type="match status" value="1"/>
</dbReference>
<dbReference type="Gene3D" id="3.40.50.720">
    <property type="entry name" value="NAD(P)-binding Rossmann-like Domain"/>
    <property type="match status" value="1"/>
</dbReference>
<dbReference type="HAMAP" id="MF_00222">
    <property type="entry name" value="Shikimate_DH_AroE"/>
    <property type="match status" value="1"/>
</dbReference>
<dbReference type="InterPro" id="IPR046346">
    <property type="entry name" value="Aminoacid_DH-like_N_sf"/>
</dbReference>
<dbReference type="InterPro" id="IPR036291">
    <property type="entry name" value="NAD(P)-bd_dom_sf"/>
</dbReference>
<dbReference type="InterPro" id="IPR041121">
    <property type="entry name" value="SDH_C"/>
</dbReference>
<dbReference type="InterPro" id="IPR011342">
    <property type="entry name" value="Shikimate_DH"/>
</dbReference>
<dbReference type="InterPro" id="IPR013708">
    <property type="entry name" value="Shikimate_DH-bd_N"/>
</dbReference>
<dbReference type="InterPro" id="IPR022893">
    <property type="entry name" value="Shikimate_DH_fam"/>
</dbReference>
<dbReference type="InterPro" id="IPR006151">
    <property type="entry name" value="Shikm_DH/Glu-tRNA_Rdtase"/>
</dbReference>
<dbReference type="NCBIfam" id="TIGR00507">
    <property type="entry name" value="aroE"/>
    <property type="match status" value="1"/>
</dbReference>
<dbReference type="NCBIfam" id="NF001310">
    <property type="entry name" value="PRK00258.1-2"/>
    <property type="match status" value="1"/>
</dbReference>
<dbReference type="PANTHER" id="PTHR21089:SF1">
    <property type="entry name" value="BIFUNCTIONAL 3-DEHYDROQUINATE DEHYDRATASE_SHIKIMATE DEHYDROGENASE, CHLOROPLASTIC"/>
    <property type="match status" value="1"/>
</dbReference>
<dbReference type="PANTHER" id="PTHR21089">
    <property type="entry name" value="SHIKIMATE DEHYDROGENASE"/>
    <property type="match status" value="1"/>
</dbReference>
<dbReference type="Pfam" id="PF18317">
    <property type="entry name" value="SDH_C"/>
    <property type="match status" value="1"/>
</dbReference>
<dbReference type="Pfam" id="PF01488">
    <property type="entry name" value="Shikimate_DH"/>
    <property type="match status" value="1"/>
</dbReference>
<dbReference type="Pfam" id="PF08501">
    <property type="entry name" value="Shikimate_dh_N"/>
    <property type="match status" value="1"/>
</dbReference>
<dbReference type="SUPFAM" id="SSF53223">
    <property type="entry name" value="Aminoacid dehydrogenase-like, N-terminal domain"/>
    <property type="match status" value="1"/>
</dbReference>
<dbReference type="SUPFAM" id="SSF51735">
    <property type="entry name" value="NAD(P)-binding Rossmann-fold domains"/>
    <property type="match status" value="1"/>
</dbReference>